<reference key="1">
    <citation type="journal article" date="1999" name="J. Biol. Chem.">
        <title>Inactivation of the dlt operon in Staphylococcus aureus confers sensitivity to defensins, protegrins, and other antimicrobial peptides.</title>
        <authorList>
            <person name="Peschel A."/>
            <person name="Otto M."/>
            <person name="Jack R.W."/>
            <person name="Kalbacher H."/>
            <person name="Jung G."/>
            <person name="Goetz F."/>
        </authorList>
    </citation>
    <scope>NUCLEOTIDE SEQUENCE [GENOMIC DNA]</scope>
</reference>
<reference key="2">
    <citation type="book" date="2006" name="Gram positive pathogens, 2nd edition">
        <title>The Staphylococcus aureus NCTC 8325 genome.</title>
        <editorList>
            <person name="Fischetti V."/>
            <person name="Novick R."/>
            <person name="Ferretti J."/>
            <person name="Portnoy D."/>
            <person name="Rood J."/>
        </editorList>
        <authorList>
            <person name="Gillaspy A.F."/>
            <person name="Worrell V."/>
            <person name="Orvis J."/>
            <person name="Roe B.A."/>
            <person name="Dyer D.W."/>
            <person name="Iandolo J.J."/>
        </authorList>
    </citation>
    <scope>NUCLEOTIDE SEQUENCE [LARGE SCALE GENOMIC DNA]</scope>
    <source>
        <strain>NCTC 8325 / PS 47</strain>
    </source>
</reference>
<reference key="3">
    <citation type="journal article" date="2013" name="Microbiology">
        <title>Revised mechanism of D-alanine incorporation into cell wall polymers in Gram-positive bacteria.</title>
        <authorList>
            <person name="Reichmann N.T."/>
            <person name="Cassona C.P."/>
            <person name="Gruendling A."/>
        </authorList>
    </citation>
    <scope>SUBCELLULAR LOCATION</scope>
</reference>
<evidence type="ECO:0000255" key="1">
    <source>
        <dbReference type="HAMAP-Rule" id="MF_00565"/>
    </source>
</evidence>
<evidence type="ECO:0000269" key="2">
    <source>
    </source>
</evidence>
<feature type="chain" id="PRO_0000289881" description="D-alanyl carrier protein">
    <location>
        <begin position="1"/>
        <end position="78"/>
    </location>
</feature>
<feature type="domain" description="Carrier" evidence="1">
    <location>
        <begin position="1"/>
        <end position="78"/>
    </location>
</feature>
<feature type="modified residue" description="O-(pantetheine 4'-phosphoryl)serine" evidence="1">
    <location>
        <position position="36"/>
    </location>
</feature>
<gene>
    <name evidence="1" type="primary">dltC</name>
    <name type="ordered locus">SAOUHSC_00871</name>
</gene>
<comment type="function">
    <text evidence="1">Carrier protein involved in the D-alanylation of lipoteichoic acid (LTA). The loading of thioester-linked D-alanine onto DltC is catalyzed by D-alanine--D-alanyl carrier protein ligase DltA. The DltC-carried D-alanyl group is further transferred to cell membrane phosphatidylglycerol (PG) by forming an ester bond, probably catalyzed by DltD. D-alanylation of LTA plays an important role in modulating the properties of the cell wall in Gram-positive bacteria, influencing the net charge of the cell wall.</text>
</comment>
<comment type="pathway">
    <text evidence="1">Cell wall biogenesis; lipoteichoic acid biosynthesis.</text>
</comment>
<comment type="subcellular location">
    <subcellularLocation>
        <location evidence="1 2">Cytoplasm</location>
    </subcellularLocation>
</comment>
<comment type="PTM">
    <text evidence="1">4'-phosphopantetheine is transferred from CoA to a specific serine of apo-DCP.</text>
</comment>
<comment type="similarity">
    <text evidence="1">Belongs to the DltC family.</text>
</comment>
<keyword id="KW-0002">3D-structure</keyword>
<keyword id="KW-0961">Cell wall biogenesis/degradation</keyword>
<keyword id="KW-0963">Cytoplasm</keyword>
<keyword id="KW-0596">Phosphopantetheine</keyword>
<keyword id="KW-0597">Phosphoprotein</keyword>
<keyword id="KW-1185">Reference proteome</keyword>
<name>DLTC_STAA8</name>
<dbReference type="EMBL" id="AF101234">
    <property type="protein sequence ID" value="AAD21959.1"/>
    <property type="molecule type" value="Genomic_DNA"/>
</dbReference>
<dbReference type="EMBL" id="CP000253">
    <property type="protein sequence ID" value="ABD29996.1"/>
    <property type="molecule type" value="Genomic_DNA"/>
</dbReference>
<dbReference type="RefSeq" id="WP_000395692.1">
    <property type="nucleotide sequence ID" value="NZ_LS483365.1"/>
</dbReference>
<dbReference type="RefSeq" id="YP_499424.1">
    <property type="nucleotide sequence ID" value="NC_007795.1"/>
</dbReference>
<dbReference type="PDB" id="8I31">
    <property type="method" value="X-ray"/>
    <property type="resolution" value="2.28 A"/>
    <property type="chains" value="A/B/C/D=1-78"/>
</dbReference>
<dbReference type="PDB" id="8I32">
    <property type="method" value="X-ray"/>
    <property type="resolution" value="2.10 A"/>
    <property type="chains" value="A/B=1-78"/>
</dbReference>
<dbReference type="PDBsum" id="8I31"/>
<dbReference type="PDBsum" id="8I32"/>
<dbReference type="SMR" id="Q2FZW4"/>
<dbReference type="STRING" id="93061.SAOUHSC_00871"/>
<dbReference type="PaxDb" id="1280-SAXN108_0929"/>
<dbReference type="GeneID" id="3919218"/>
<dbReference type="GeneID" id="98345253"/>
<dbReference type="KEGG" id="sao:SAOUHSC_00871"/>
<dbReference type="PATRIC" id="fig|93061.5.peg.791"/>
<dbReference type="eggNOG" id="COG0236">
    <property type="taxonomic scope" value="Bacteria"/>
</dbReference>
<dbReference type="HOGENOM" id="CLU_108696_19_0_9"/>
<dbReference type="OrthoDB" id="6462171at2"/>
<dbReference type="UniPathway" id="UPA00556"/>
<dbReference type="PRO" id="PR:Q2FZW4"/>
<dbReference type="Proteomes" id="UP000008816">
    <property type="component" value="Chromosome"/>
</dbReference>
<dbReference type="GO" id="GO:0005737">
    <property type="term" value="C:cytoplasm"/>
    <property type="evidence" value="ECO:0007669"/>
    <property type="project" value="UniProtKB-SubCell"/>
</dbReference>
<dbReference type="GO" id="GO:0036370">
    <property type="term" value="F:D-alanyl carrier activity"/>
    <property type="evidence" value="ECO:0007669"/>
    <property type="project" value="UniProtKB-UniRule"/>
</dbReference>
<dbReference type="GO" id="GO:0071555">
    <property type="term" value="P:cell wall organization"/>
    <property type="evidence" value="ECO:0007669"/>
    <property type="project" value="UniProtKB-KW"/>
</dbReference>
<dbReference type="GO" id="GO:0070395">
    <property type="term" value="P:lipoteichoic acid biosynthetic process"/>
    <property type="evidence" value="ECO:0007669"/>
    <property type="project" value="UniProtKB-UniRule"/>
</dbReference>
<dbReference type="Gene3D" id="1.10.1200.10">
    <property type="entry name" value="ACP-like"/>
    <property type="match status" value="1"/>
</dbReference>
<dbReference type="HAMAP" id="MF_00565">
    <property type="entry name" value="DltC"/>
    <property type="match status" value="1"/>
</dbReference>
<dbReference type="InterPro" id="IPR036736">
    <property type="entry name" value="ACP-like_sf"/>
</dbReference>
<dbReference type="InterPro" id="IPR003230">
    <property type="entry name" value="DltC"/>
</dbReference>
<dbReference type="InterPro" id="IPR009081">
    <property type="entry name" value="PP-bd_ACP"/>
</dbReference>
<dbReference type="NCBIfam" id="TIGR01688">
    <property type="entry name" value="dltC"/>
    <property type="match status" value="1"/>
</dbReference>
<dbReference type="NCBIfam" id="NF003464">
    <property type="entry name" value="PRK05087.1"/>
    <property type="match status" value="1"/>
</dbReference>
<dbReference type="Pfam" id="PF00550">
    <property type="entry name" value="PP-binding"/>
    <property type="match status" value="1"/>
</dbReference>
<dbReference type="SUPFAM" id="SSF47336">
    <property type="entry name" value="ACP-like"/>
    <property type="match status" value="1"/>
</dbReference>
<dbReference type="PROSITE" id="PS50075">
    <property type="entry name" value="CARRIER"/>
    <property type="match status" value="1"/>
</dbReference>
<sequence length="78" mass="9063">MEFREQVLNLLAEVAENDIVKENPDVEIFEEGIIDSFQTVGLLLEIQNKLDIEVSIMDFDRDEWATPNKIVEALEELR</sequence>
<protein>
    <recommendedName>
        <fullName evidence="1">D-alanyl carrier protein</fullName>
        <shortName evidence="1">DCP</shortName>
    </recommendedName>
    <alternativeName>
        <fullName evidence="1">D-alanine--poly(phosphoribitol) ligase subunit 2</fullName>
    </alternativeName>
</protein>
<organism>
    <name type="scientific">Staphylococcus aureus (strain NCTC 8325 / PS 47)</name>
    <dbReference type="NCBI Taxonomy" id="93061"/>
    <lineage>
        <taxon>Bacteria</taxon>
        <taxon>Bacillati</taxon>
        <taxon>Bacillota</taxon>
        <taxon>Bacilli</taxon>
        <taxon>Bacillales</taxon>
        <taxon>Staphylococcaceae</taxon>
        <taxon>Staphylococcus</taxon>
    </lineage>
</organism>
<proteinExistence type="evidence at protein level"/>
<accession>Q2FZW4</accession>
<accession>P0A021</accession>
<accession>Q53663</accession>